<sequence length="215" mass="23633">MRIKICGITQPDQGQAIAQLGATALGFICVPQSPRYVTPDQIQGVITQLSISVDRIGVFANASLSQIEQVVQQTELTGVQLHGDESPQLCSEIKQRFNHLELIKAFRVKNLEALAQITAYFDRVDTLLLDAYHPQLLGGTGHTLNWDNLAHFNPPLPWFLAGGLTPDNIQEALTRLHPTGIDLSSGVERSPGDKDLTKVAQLLTQLQQFSSKKFP</sequence>
<accession>B7JUH3</accession>
<dbReference type="EC" id="5.3.1.24" evidence="1"/>
<dbReference type="EMBL" id="CP001287">
    <property type="protein sequence ID" value="ACK64553.1"/>
    <property type="molecule type" value="Genomic_DNA"/>
</dbReference>
<dbReference type="RefSeq" id="WP_012593830.1">
    <property type="nucleotide sequence ID" value="NC_011726.1"/>
</dbReference>
<dbReference type="SMR" id="B7JUH3"/>
<dbReference type="STRING" id="41431.PCC8801_0457"/>
<dbReference type="KEGG" id="cyp:PCC8801_0457"/>
<dbReference type="eggNOG" id="COG0135">
    <property type="taxonomic scope" value="Bacteria"/>
</dbReference>
<dbReference type="HOGENOM" id="CLU_076364_2_0_3"/>
<dbReference type="OrthoDB" id="9786954at2"/>
<dbReference type="UniPathway" id="UPA00035">
    <property type="reaction ID" value="UER00042"/>
</dbReference>
<dbReference type="Proteomes" id="UP000008204">
    <property type="component" value="Chromosome"/>
</dbReference>
<dbReference type="GO" id="GO:0004640">
    <property type="term" value="F:phosphoribosylanthranilate isomerase activity"/>
    <property type="evidence" value="ECO:0007669"/>
    <property type="project" value="UniProtKB-UniRule"/>
</dbReference>
<dbReference type="GO" id="GO:0000162">
    <property type="term" value="P:L-tryptophan biosynthetic process"/>
    <property type="evidence" value="ECO:0007669"/>
    <property type="project" value="UniProtKB-UniRule"/>
</dbReference>
<dbReference type="CDD" id="cd00405">
    <property type="entry name" value="PRAI"/>
    <property type="match status" value="1"/>
</dbReference>
<dbReference type="FunFam" id="3.20.20.70:FF:000075">
    <property type="entry name" value="Tryptophan biosynthesis protein TRP1"/>
    <property type="match status" value="1"/>
</dbReference>
<dbReference type="Gene3D" id="3.20.20.70">
    <property type="entry name" value="Aldolase class I"/>
    <property type="match status" value="1"/>
</dbReference>
<dbReference type="HAMAP" id="MF_00135">
    <property type="entry name" value="PRAI"/>
    <property type="match status" value="1"/>
</dbReference>
<dbReference type="InterPro" id="IPR013785">
    <property type="entry name" value="Aldolase_TIM"/>
</dbReference>
<dbReference type="InterPro" id="IPR001240">
    <property type="entry name" value="PRAI_dom"/>
</dbReference>
<dbReference type="InterPro" id="IPR011060">
    <property type="entry name" value="RibuloseP-bd_barrel"/>
</dbReference>
<dbReference type="InterPro" id="IPR044643">
    <property type="entry name" value="TrpF_fam"/>
</dbReference>
<dbReference type="NCBIfam" id="NF002298">
    <property type="entry name" value="PRK01222.1-4"/>
    <property type="match status" value="1"/>
</dbReference>
<dbReference type="PANTHER" id="PTHR42894">
    <property type="entry name" value="N-(5'-PHOSPHORIBOSYL)ANTHRANILATE ISOMERASE"/>
    <property type="match status" value="1"/>
</dbReference>
<dbReference type="PANTHER" id="PTHR42894:SF1">
    <property type="entry name" value="N-(5'-PHOSPHORIBOSYL)ANTHRANILATE ISOMERASE"/>
    <property type="match status" value="1"/>
</dbReference>
<dbReference type="Pfam" id="PF00697">
    <property type="entry name" value="PRAI"/>
    <property type="match status" value="1"/>
</dbReference>
<dbReference type="SUPFAM" id="SSF51366">
    <property type="entry name" value="Ribulose-phoshate binding barrel"/>
    <property type="match status" value="1"/>
</dbReference>
<feature type="chain" id="PRO_1000197097" description="N-(5'-phosphoribosyl)anthranilate isomerase">
    <location>
        <begin position="1"/>
        <end position="215"/>
    </location>
</feature>
<reference key="1">
    <citation type="journal article" date="2011" name="MBio">
        <title>Novel metabolic attributes of the genus Cyanothece, comprising a group of unicellular nitrogen-fixing Cyanobacteria.</title>
        <authorList>
            <person name="Bandyopadhyay A."/>
            <person name="Elvitigala T."/>
            <person name="Welsh E."/>
            <person name="Stockel J."/>
            <person name="Liberton M."/>
            <person name="Min H."/>
            <person name="Sherman L.A."/>
            <person name="Pakrasi H.B."/>
        </authorList>
    </citation>
    <scope>NUCLEOTIDE SEQUENCE [LARGE SCALE GENOMIC DNA]</scope>
    <source>
        <strain>PCC 8801 / RF-1</strain>
    </source>
</reference>
<keyword id="KW-0028">Amino-acid biosynthesis</keyword>
<keyword id="KW-0057">Aromatic amino acid biosynthesis</keyword>
<keyword id="KW-0413">Isomerase</keyword>
<keyword id="KW-1185">Reference proteome</keyword>
<keyword id="KW-0822">Tryptophan biosynthesis</keyword>
<gene>
    <name evidence="1" type="primary">trpF</name>
    <name type="ordered locus">PCC8801_0457</name>
</gene>
<protein>
    <recommendedName>
        <fullName evidence="1">N-(5'-phosphoribosyl)anthranilate isomerase</fullName>
        <shortName evidence="1">PRAI</shortName>
        <ecNumber evidence="1">5.3.1.24</ecNumber>
    </recommendedName>
</protein>
<name>TRPF_RIPO1</name>
<proteinExistence type="inferred from homology"/>
<comment type="catalytic activity">
    <reaction evidence="1">
        <text>N-(5-phospho-beta-D-ribosyl)anthranilate = 1-(2-carboxyphenylamino)-1-deoxy-D-ribulose 5-phosphate</text>
        <dbReference type="Rhea" id="RHEA:21540"/>
        <dbReference type="ChEBI" id="CHEBI:18277"/>
        <dbReference type="ChEBI" id="CHEBI:58613"/>
        <dbReference type="EC" id="5.3.1.24"/>
    </reaction>
</comment>
<comment type="pathway">
    <text evidence="1">Amino-acid biosynthesis; L-tryptophan biosynthesis; L-tryptophan from chorismate: step 3/5.</text>
</comment>
<comment type="similarity">
    <text evidence="1">Belongs to the TrpF family.</text>
</comment>
<evidence type="ECO:0000255" key="1">
    <source>
        <dbReference type="HAMAP-Rule" id="MF_00135"/>
    </source>
</evidence>
<organism>
    <name type="scientific">Rippkaea orientalis (strain PCC 8801 / RF-1)</name>
    <name type="common">Cyanothece sp. (strain PCC 8801)</name>
    <dbReference type="NCBI Taxonomy" id="41431"/>
    <lineage>
        <taxon>Bacteria</taxon>
        <taxon>Bacillati</taxon>
        <taxon>Cyanobacteriota</taxon>
        <taxon>Cyanophyceae</taxon>
        <taxon>Oscillatoriophycideae</taxon>
        <taxon>Chroococcales</taxon>
        <taxon>Aphanothecaceae</taxon>
        <taxon>Rippkaea</taxon>
        <taxon>Rippkaea orientalis</taxon>
    </lineage>
</organism>